<gene>
    <name evidence="1" type="primary">hisG</name>
    <name type="ordered locus">SEN2070</name>
</gene>
<feature type="chain" id="PRO_1000092746" description="ATP phosphoribosyltransferase">
    <location>
        <begin position="1"/>
        <end position="299"/>
    </location>
</feature>
<proteinExistence type="inferred from homology"/>
<dbReference type="EC" id="2.4.2.17" evidence="1"/>
<dbReference type="EMBL" id="AM933172">
    <property type="protein sequence ID" value="CAR33649.1"/>
    <property type="molecule type" value="Genomic_DNA"/>
</dbReference>
<dbReference type="RefSeq" id="WP_000886600.1">
    <property type="nucleotide sequence ID" value="NC_011294.1"/>
</dbReference>
<dbReference type="SMR" id="B5QZL1"/>
<dbReference type="KEGG" id="set:SEN2070"/>
<dbReference type="HOGENOM" id="CLU_038115_1_0_6"/>
<dbReference type="UniPathway" id="UPA00031">
    <property type="reaction ID" value="UER00006"/>
</dbReference>
<dbReference type="PHI-base" id="PHI:5109"/>
<dbReference type="Proteomes" id="UP000000613">
    <property type="component" value="Chromosome"/>
</dbReference>
<dbReference type="GO" id="GO:0005737">
    <property type="term" value="C:cytoplasm"/>
    <property type="evidence" value="ECO:0007669"/>
    <property type="project" value="UniProtKB-SubCell"/>
</dbReference>
<dbReference type="GO" id="GO:0005524">
    <property type="term" value="F:ATP binding"/>
    <property type="evidence" value="ECO:0007669"/>
    <property type="project" value="UniProtKB-KW"/>
</dbReference>
<dbReference type="GO" id="GO:0003879">
    <property type="term" value="F:ATP phosphoribosyltransferase activity"/>
    <property type="evidence" value="ECO:0007669"/>
    <property type="project" value="UniProtKB-UniRule"/>
</dbReference>
<dbReference type="GO" id="GO:0000287">
    <property type="term" value="F:magnesium ion binding"/>
    <property type="evidence" value="ECO:0007669"/>
    <property type="project" value="UniProtKB-UniRule"/>
</dbReference>
<dbReference type="GO" id="GO:0000105">
    <property type="term" value="P:L-histidine biosynthetic process"/>
    <property type="evidence" value="ECO:0007669"/>
    <property type="project" value="UniProtKB-UniRule"/>
</dbReference>
<dbReference type="CDD" id="cd13592">
    <property type="entry name" value="PBP2_HisGL2"/>
    <property type="match status" value="1"/>
</dbReference>
<dbReference type="FunFam" id="3.30.70.120:FF:000002">
    <property type="entry name" value="ATP phosphoribosyltransferase"/>
    <property type="match status" value="1"/>
</dbReference>
<dbReference type="FunFam" id="3.40.190.10:FF:000008">
    <property type="entry name" value="ATP phosphoribosyltransferase"/>
    <property type="match status" value="1"/>
</dbReference>
<dbReference type="Gene3D" id="3.30.70.120">
    <property type="match status" value="1"/>
</dbReference>
<dbReference type="Gene3D" id="3.40.190.10">
    <property type="entry name" value="Periplasmic binding protein-like II"/>
    <property type="match status" value="2"/>
</dbReference>
<dbReference type="HAMAP" id="MF_00079">
    <property type="entry name" value="HisG_Long"/>
    <property type="match status" value="1"/>
</dbReference>
<dbReference type="InterPro" id="IPR020621">
    <property type="entry name" value="ATP-PRT_HisG_long"/>
</dbReference>
<dbReference type="InterPro" id="IPR013820">
    <property type="entry name" value="ATP_PRibTrfase_cat"/>
</dbReference>
<dbReference type="InterPro" id="IPR018198">
    <property type="entry name" value="ATP_PRibTrfase_CS"/>
</dbReference>
<dbReference type="InterPro" id="IPR001348">
    <property type="entry name" value="ATP_PRibTrfase_HisG"/>
</dbReference>
<dbReference type="InterPro" id="IPR013115">
    <property type="entry name" value="HisG_C"/>
</dbReference>
<dbReference type="InterPro" id="IPR011322">
    <property type="entry name" value="N-reg_PII-like_a/b"/>
</dbReference>
<dbReference type="InterPro" id="IPR015867">
    <property type="entry name" value="N-reg_PII/ATP_PRibTrfase_C"/>
</dbReference>
<dbReference type="NCBIfam" id="TIGR00070">
    <property type="entry name" value="hisG"/>
    <property type="match status" value="1"/>
</dbReference>
<dbReference type="NCBIfam" id="TIGR03455">
    <property type="entry name" value="HisG_C-term"/>
    <property type="match status" value="1"/>
</dbReference>
<dbReference type="PANTHER" id="PTHR21403:SF8">
    <property type="entry name" value="ATP PHOSPHORIBOSYLTRANSFERASE"/>
    <property type="match status" value="1"/>
</dbReference>
<dbReference type="PANTHER" id="PTHR21403">
    <property type="entry name" value="ATP PHOSPHORIBOSYLTRANSFERASE ATP-PRTASE"/>
    <property type="match status" value="1"/>
</dbReference>
<dbReference type="Pfam" id="PF01634">
    <property type="entry name" value="HisG"/>
    <property type="match status" value="1"/>
</dbReference>
<dbReference type="Pfam" id="PF08029">
    <property type="entry name" value="HisG_C"/>
    <property type="match status" value="1"/>
</dbReference>
<dbReference type="SUPFAM" id="SSF54913">
    <property type="entry name" value="GlnB-like"/>
    <property type="match status" value="1"/>
</dbReference>
<dbReference type="SUPFAM" id="SSF53850">
    <property type="entry name" value="Periplasmic binding protein-like II"/>
    <property type="match status" value="1"/>
</dbReference>
<dbReference type="PROSITE" id="PS01316">
    <property type="entry name" value="ATP_P_PHORIBOSYLTR"/>
    <property type="match status" value="1"/>
</dbReference>
<evidence type="ECO:0000255" key="1">
    <source>
        <dbReference type="HAMAP-Rule" id="MF_00079"/>
    </source>
</evidence>
<protein>
    <recommendedName>
        <fullName evidence="1">ATP phosphoribosyltransferase</fullName>
        <shortName evidence="1">ATP-PRT</shortName>
        <shortName evidence="1">ATP-PRTase</shortName>
        <ecNumber evidence="1">2.4.2.17</ecNumber>
    </recommendedName>
</protein>
<accession>B5QZL1</accession>
<comment type="function">
    <text evidence="1">Catalyzes the condensation of ATP and 5-phosphoribose 1-diphosphate to form N'-(5'-phosphoribosyl)-ATP (PR-ATP). Has a crucial role in the pathway because the rate of histidine biosynthesis seems to be controlled primarily by regulation of HisG enzymatic activity.</text>
</comment>
<comment type="catalytic activity">
    <reaction evidence="1">
        <text>1-(5-phospho-beta-D-ribosyl)-ATP + diphosphate = 5-phospho-alpha-D-ribose 1-diphosphate + ATP</text>
        <dbReference type="Rhea" id="RHEA:18473"/>
        <dbReference type="ChEBI" id="CHEBI:30616"/>
        <dbReference type="ChEBI" id="CHEBI:33019"/>
        <dbReference type="ChEBI" id="CHEBI:58017"/>
        <dbReference type="ChEBI" id="CHEBI:73183"/>
        <dbReference type="EC" id="2.4.2.17"/>
    </reaction>
</comment>
<comment type="cofactor">
    <cofactor evidence="1">
        <name>Mg(2+)</name>
        <dbReference type="ChEBI" id="CHEBI:18420"/>
    </cofactor>
</comment>
<comment type="activity regulation">
    <text evidence="1">Feedback inhibited by histidine.</text>
</comment>
<comment type="pathway">
    <text evidence="1">Amino-acid biosynthesis; L-histidine biosynthesis; L-histidine from 5-phospho-alpha-D-ribose 1-diphosphate: step 1/9.</text>
</comment>
<comment type="subunit">
    <text evidence="1">Equilibrium between an active dimeric form, an inactive hexameric form and higher aggregates. Interconversion between the various forms is largely reversible and is influenced by the natural substrates and inhibitors of the enzyme.</text>
</comment>
<comment type="subcellular location">
    <subcellularLocation>
        <location evidence="1">Cytoplasm</location>
    </subcellularLocation>
</comment>
<comment type="similarity">
    <text evidence="1">Belongs to the ATP phosphoribosyltransferase family. Long subfamily.</text>
</comment>
<name>HIS1_SALEP</name>
<reference key="1">
    <citation type="journal article" date="2008" name="Genome Res.">
        <title>Comparative genome analysis of Salmonella enteritidis PT4 and Salmonella gallinarum 287/91 provides insights into evolutionary and host adaptation pathways.</title>
        <authorList>
            <person name="Thomson N.R."/>
            <person name="Clayton D.J."/>
            <person name="Windhorst D."/>
            <person name="Vernikos G."/>
            <person name="Davidson S."/>
            <person name="Churcher C."/>
            <person name="Quail M.A."/>
            <person name="Stevens M."/>
            <person name="Jones M.A."/>
            <person name="Watson M."/>
            <person name="Barron A."/>
            <person name="Layton A."/>
            <person name="Pickard D."/>
            <person name="Kingsley R.A."/>
            <person name="Bignell A."/>
            <person name="Clark L."/>
            <person name="Harris B."/>
            <person name="Ormond D."/>
            <person name="Abdellah Z."/>
            <person name="Brooks K."/>
            <person name="Cherevach I."/>
            <person name="Chillingworth T."/>
            <person name="Woodward J."/>
            <person name="Norberczak H."/>
            <person name="Lord A."/>
            <person name="Arrowsmith C."/>
            <person name="Jagels K."/>
            <person name="Moule S."/>
            <person name="Mungall K."/>
            <person name="Saunders M."/>
            <person name="Whitehead S."/>
            <person name="Chabalgoity J.A."/>
            <person name="Maskell D."/>
            <person name="Humphreys T."/>
            <person name="Roberts M."/>
            <person name="Barrow P.A."/>
            <person name="Dougan G."/>
            <person name="Parkhill J."/>
        </authorList>
    </citation>
    <scope>NUCLEOTIDE SEQUENCE [LARGE SCALE GENOMIC DNA]</scope>
    <source>
        <strain>P125109</strain>
    </source>
</reference>
<sequence>MLDNTRLRIAIQKSGRLSDDSRELLARCGIKINLHTQRLIAMAENMPIDILRVRDDDIPGLVMDGVVDLGIIGENVLEEELLNRRAQGEDPRYFTLRRLDFGGCRLSLATPVDEAWDGPAALDGKRIATSYPHLLKRYLDQKGVSFKSCLLNGSVEVAPRAGLADAICDLVSTGATLEANGLREVEVIYRSKACLIQRDGEMAQSKQQLIDKLLTRIQGVIQARESKYIMMHAPSERLEEVIALLPGAERPTILPLAGEQQRVAMHMVSSETLFWETMEKLKALGASSILVLPIEKMME</sequence>
<keyword id="KW-0028">Amino-acid biosynthesis</keyword>
<keyword id="KW-0067">ATP-binding</keyword>
<keyword id="KW-0963">Cytoplasm</keyword>
<keyword id="KW-0328">Glycosyltransferase</keyword>
<keyword id="KW-0368">Histidine biosynthesis</keyword>
<keyword id="KW-0460">Magnesium</keyword>
<keyword id="KW-0479">Metal-binding</keyword>
<keyword id="KW-0547">Nucleotide-binding</keyword>
<keyword id="KW-0808">Transferase</keyword>
<organism>
    <name type="scientific">Salmonella enteritidis PT4 (strain P125109)</name>
    <dbReference type="NCBI Taxonomy" id="550537"/>
    <lineage>
        <taxon>Bacteria</taxon>
        <taxon>Pseudomonadati</taxon>
        <taxon>Pseudomonadota</taxon>
        <taxon>Gammaproteobacteria</taxon>
        <taxon>Enterobacterales</taxon>
        <taxon>Enterobacteriaceae</taxon>
        <taxon>Salmonella</taxon>
    </lineage>
</organism>